<name>LAS2_MACFA</name>
<sequence>MAKSKTKHRLCSRESSVSSLLASCSLSDSNSSNSDGSYHYKDKLYRSASQALQAYIDDFDLSQMYPGTSTGKINIDEDFTNMSQFCNYIYKPNNAFENLDHKKHSNFISCRRQTINDIDSMSLTTDDLLRLPADGSFSYTYVGPSHRTNKKNKKCHGRLGSSDVEKNPNFQGPSTPVGDKIELLILKAKRNLEQCTEELPKSMKKDDSPCSLDKLEAERSWENIPVTFKSPIPVNSDDSPQQTSRAKSATGVLEDFLNNDNQSCTLSGGKHHGPVEALKQMLFNLQAVQERFNQNKATEPKEEIKQVSEDDFSKLQLKERQF</sequence>
<comment type="function">
    <text evidence="1">Might play a role in cell proliferation.</text>
</comment>
<comment type="subcellular location">
    <subcellularLocation>
        <location evidence="5">Secreted</location>
    </subcellularLocation>
</comment>
<gene>
    <name type="primary">LAS2</name>
    <name type="ORF">QtsA-13763</name>
</gene>
<proteinExistence type="evidence at transcript level"/>
<feature type="signal peptide" evidence="3">
    <location>
        <begin position="1"/>
        <end position="31"/>
    </location>
</feature>
<feature type="chain" id="PRO_0000019562" description="Lung adenoma susceptibility protein 2 homolog">
    <location>
        <begin position="32"/>
        <end position="322"/>
    </location>
</feature>
<feature type="region of interest" description="Disordered" evidence="4">
    <location>
        <begin position="148"/>
        <end position="175"/>
    </location>
</feature>
<feature type="region of interest" description="Disordered" evidence="4">
    <location>
        <begin position="228"/>
        <end position="248"/>
    </location>
</feature>
<feature type="compositionally biased region" description="Basic residues" evidence="4">
    <location>
        <begin position="148"/>
        <end position="157"/>
    </location>
</feature>
<feature type="compositionally biased region" description="Polar residues" evidence="4">
    <location>
        <begin position="236"/>
        <end position="247"/>
    </location>
</feature>
<feature type="modified residue" description="Phosphoserine" evidence="2">
    <location>
        <position position="161"/>
    </location>
</feature>
<reference key="1">
    <citation type="submission" date="2005-06" db="EMBL/GenBank/DDBJ databases">
        <title>DNA sequences of macaque genes expressed in brain or testis and its evolutionary implications.</title>
        <authorList>
            <consortium name="International consortium for macaque cDNA sequencing and analysis"/>
        </authorList>
    </citation>
    <scope>NUCLEOTIDE SEQUENCE [LARGE SCALE MRNA]</scope>
    <source>
        <tissue>Testis</tissue>
    </source>
</reference>
<accession>Q4R815</accession>
<protein>
    <recommendedName>
        <fullName>Lung adenoma susceptibility protein 2 homolog</fullName>
    </recommendedName>
</protein>
<evidence type="ECO:0000250" key="1"/>
<evidence type="ECO:0000250" key="2">
    <source>
        <dbReference type="UniProtKB" id="Q8IYD9"/>
    </source>
</evidence>
<evidence type="ECO:0000255" key="3"/>
<evidence type="ECO:0000256" key="4">
    <source>
        <dbReference type="SAM" id="MobiDB-lite"/>
    </source>
</evidence>
<evidence type="ECO:0000305" key="5"/>
<keyword id="KW-0597">Phosphoprotein</keyword>
<keyword id="KW-1185">Reference proteome</keyword>
<keyword id="KW-0964">Secreted</keyword>
<keyword id="KW-0732">Signal</keyword>
<dbReference type="EMBL" id="AB168646">
    <property type="protein sequence ID" value="BAE00757.1"/>
    <property type="molecule type" value="mRNA"/>
</dbReference>
<dbReference type="SMR" id="Q4R815"/>
<dbReference type="eggNOG" id="ENOG502RM40">
    <property type="taxonomic scope" value="Eukaryota"/>
</dbReference>
<dbReference type="Proteomes" id="UP000233100">
    <property type="component" value="Unplaced"/>
</dbReference>
<dbReference type="GO" id="GO:0005576">
    <property type="term" value="C:extracellular region"/>
    <property type="evidence" value="ECO:0007669"/>
    <property type="project" value="UniProtKB-SubCell"/>
</dbReference>
<dbReference type="InterPro" id="IPR052679">
    <property type="entry name" value="Cell_Prolif_Regulator"/>
</dbReference>
<dbReference type="InterPro" id="IPR031587">
    <property type="entry name" value="LAS2"/>
</dbReference>
<dbReference type="PANTHER" id="PTHR35079">
    <property type="entry name" value="LUNG ADENOMA SUSCEPTIBILITY PROTEIN 2"/>
    <property type="match status" value="1"/>
</dbReference>
<dbReference type="PANTHER" id="PTHR35079:SF1">
    <property type="entry name" value="LUNG ADENOMA SUSCEPTIBILITY PROTEIN 2"/>
    <property type="match status" value="1"/>
</dbReference>
<dbReference type="Pfam" id="PF15792">
    <property type="entry name" value="LAS2"/>
    <property type="match status" value="1"/>
</dbReference>
<organism>
    <name type="scientific">Macaca fascicularis</name>
    <name type="common">Crab-eating macaque</name>
    <name type="synonym">Cynomolgus monkey</name>
    <dbReference type="NCBI Taxonomy" id="9541"/>
    <lineage>
        <taxon>Eukaryota</taxon>
        <taxon>Metazoa</taxon>
        <taxon>Chordata</taxon>
        <taxon>Craniata</taxon>
        <taxon>Vertebrata</taxon>
        <taxon>Euteleostomi</taxon>
        <taxon>Mammalia</taxon>
        <taxon>Eutheria</taxon>
        <taxon>Euarchontoglires</taxon>
        <taxon>Primates</taxon>
        <taxon>Haplorrhini</taxon>
        <taxon>Catarrhini</taxon>
        <taxon>Cercopithecidae</taxon>
        <taxon>Cercopithecinae</taxon>
        <taxon>Macaca</taxon>
    </lineage>
</organism>